<protein>
    <recommendedName>
        <fullName>DASH complex subunit ASK1</fullName>
    </recommendedName>
    <alternativeName>
        <fullName>Associated with spindles and kinetochores protein 1</fullName>
    </alternativeName>
    <alternativeName>
        <fullName>Outer kinetochore protein ASK1</fullName>
    </alternativeName>
</protein>
<accession>A6ZZR4</accession>
<feature type="chain" id="PRO_0000345954" description="DASH complex subunit ASK1">
    <location>
        <begin position="1"/>
        <end position="292"/>
    </location>
</feature>
<feature type="region of interest" description="Disordered" evidence="3">
    <location>
        <begin position="99"/>
        <end position="118"/>
    </location>
</feature>
<feature type="region of interest" description="Disordered" evidence="3">
    <location>
        <begin position="149"/>
        <end position="194"/>
    </location>
</feature>
<feature type="region of interest" description="Disordered" evidence="3">
    <location>
        <begin position="226"/>
        <end position="292"/>
    </location>
</feature>
<feature type="compositionally biased region" description="Acidic residues" evidence="3">
    <location>
        <begin position="265"/>
        <end position="275"/>
    </location>
</feature>
<feature type="modified residue" description="Phosphoserine" evidence="1">
    <location>
        <position position="26"/>
    </location>
</feature>
<feature type="modified residue" description="Phosphoserine" evidence="1">
    <location>
        <position position="118"/>
    </location>
</feature>
<feature type="modified residue" description="Phosphoserine" evidence="1">
    <location>
        <position position="134"/>
    </location>
</feature>
<feature type="modified residue" description="Phosphothreonine" evidence="1">
    <location>
        <position position="140"/>
    </location>
</feature>
<feature type="modified residue" description="Phosphoserine" evidence="1">
    <location>
        <position position="155"/>
    </location>
</feature>
<feature type="modified residue" description="Phosphoserine" evidence="1">
    <location>
        <position position="156"/>
    </location>
</feature>
<feature type="modified residue" description="Phosphoserine; by IPL1" evidence="1">
    <location>
        <position position="200"/>
    </location>
</feature>
<feature type="modified residue" description="Phosphoserine" evidence="1">
    <location>
        <position position="216"/>
    </location>
</feature>
<feature type="modified residue" description="Phosphoserine; by CDC28" evidence="1">
    <location>
        <position position="250"/>
    </location>
</feature>
<comment type="function">
    <text evidence="1">Component of the DASH complex that connects microtubules with kinetochores and couples microtubule depolymerisation to chromosome movement; it is involved in retrieving kinetochores to the spindle poles before their re-orientation on the spindle in early mitosis and allows microtubule depolymerization to pull chromosomes apart and resist detachment during anaphase. Kinetochores, consisting of a centromere-associated inner segment and a microtubule-contacting outer segment, play a crucial role in chromosome segregation by mediating the physical connection between centromeric DNA and microtubules. Kinetochores also serve as an input point for the spindle assembly checkpoint, which delays anaphase until all chromosomes have bioriented on the mitotic spindle. During spindle-kinetochore attachment, kinetochores first attach to the lateral surface of spindle microtubules, which supports the congression of chromosomes toward the middle of the dividing cell; they then slide along towards the spindle pole, a process independent of the DASH complex but requiring the NDC80 complex. When the end of a disassembling microtubule reaches the laterally attached kinetochore, the DASH complex together with the NDC80 complex and STU2 convert lateral attachment to end-on capture to produce a structure that can track with microtubule shortening and sustain attachment when tension is applied across sister kinetochores upon their biorientation. Microtubule depolymerization proceeds by protofilament splaying and induces the kinetochore-attached DASH complex to slide longitudinally, thereby helping to transduce depolymerization energy into pulling forces to disjoin chromatids. Incorrect microtubule attachments are corrected by releasing microubules from the kinetochore through phosphorylation by IPL1 of kinetochore components. Links the microtubule cytoskeleton to chromosomes during interphase. Also contributes to the poleward transport of kinetochores on microtubules following centromeric DNA replication in S-phase.</text>
</comment>
<comment type="subunit">
    <text evidence="1 2">Component of the DASH complex consisting of ASK1, DAD1, DAD2, DAD3, DAD4, DAM1, DUO1, HSK3, SPC19 and SPC34, with a stoichiometry of one copy of each subunit per complex. Multiple DASH complexes oligomerize to form a ring that encircles spindle microtubules and organizes the rod-like NDC80 complexes of the outer kinetochore. DASH complex oligomerization strengthens microtubule attachments (By similarity). On cytoplasmic microtubules, DASH complexes appear to form patches instead of rings (By similarity).</text>
</comment>
<comment type="subcellular location">
    <subcellularLocation>
        <location evidence="1">Nucleus</location>
    </subcellularLocation>
    <subcellularLocation>
        <location evidence="1">Cytoplasm</location>
        <location evidence="1">Cytoskeleton</location>
        <location evidence="1">Spindle</location>
    </subcellularLocation>
    <subcellularLocation>
        <location evidence="1">Chromosome</location>
        <location evidence="1">Centromere</location>
        <location evidence="1">Kinetochore</location>
    </subcellularLocation>
    <subcellularLocation>
        <location evidence="1">Chromosome</location>
    </subcellularLocation>
    <text evidence="1">Associates with the mitotic spindle and the kinetochore. Localizes to microtubule plus-ends. Associates with origin of replication (ORI) sites during interphase.</text>
</comment>
<comment type="similarity">
    <text evidence="4">Belongs to the DASH complex ASK1 family.</text>
</comment>
<evidence type="ECO:0000250" key="1">
    <source>
        <dbReference type="UniProtKB" id="P35734"/>
    </source>
</evidence>
<evidence type="ECO:0000250" key="2">
    <source>
        <dbReference type="UniProtKB" id="Q9P6S5"/>
    </source>
</evidence>
<evidence type="ECO:0000256" key="3">
    <source>
        <dbReference type="SAM" id="MobiDB-lite"/>
    </source>
</evidence>
<evidence type="ECO:0000305" key="4"/>
<proteinExistence type="inferred from homology"/>
<gene>
    <name type="primary">ASK1</name>
    <name type="ORF">SCY_3324</name>
</gene>
<sequence>MDSASKEETLEKLDQEITVNLQKIDSNLSFCFHKITQDIIPHVATYSEICERIMDSTEWLGTMFQETGLVNLQANAAAPVGNAPVKSVVSNNVGIFPTSAEEASRESQTDNGPNEADSAVHVNRDVHSMFTNDSIDDFHTANITSTGQILKLPDSSDEDTGSEAVPSREQTDLTGEGHGGADDEQDESTIQRQSRKRKISLLLQQQYGSSSSMVPSPIVPNKMRKQLAHEEHINNDGDNDDENSNNIESSPLKQGHHHPKGQADDNNEGPDEEESTKEVPKPGTIIHFSTNR</sequence>
<dbReference type="EMBL" id="AAFW02000152">
    <property type="protein sequence ID" value="EDN59857.1"/>
    <property type="molecule type" value="Genomic_DNA"/>
</dbReference>
<dbReference type="SMR" id="A6ZZR4"/>
<dbReference type="HOGENOM" id="CLU_090087_0_0_1"/>
<dbReference type="Proteomes" id="UP000007060">
    <property type="component" value="Unassembled WGS sequence"/>
</dbReference>
<dbReference type="GO" id="GO:0005737">
    <property type="term" value="C:cytoplasm"/>
    <property type="evidence" value="ECO:0007669"/>
    <property type="project" value="UniProtKB-KW"/>
</dbReference>
<dbReference type="GO" id="GO:0042729">
    <property type="term" value="C:DASH complex"/>
    <property type="evidence" value="ECO:0000250"/>
    <property type="project" value="UniProtKB"/>
</dbReference>
<dbReference type="GO" id="GO:0005874">
    <property type="term" value="C:microtubule"/>
    <property type="evidence" value="ECO:0007669"/>
    <property type="project" value="UniProtKB-KW"/>
</dbReference>
<dbReference type="GO" id="GO:0072686">
    <property type="term" value="C:mitotic spindle"/>
    <property type="evidence" value="ECO:0007669"/>
    <property type="project" value="InterPro"/>
</dbReference>
<dbReference type="GO" id="GO:0044732">
    <property type="term" value="C:mitotic spindle pole body"/>
    <property type="evidence" value="ECO:0007669"/>
    <property type="project" value="TreeGrafter"/>
</dbReference>
<dbReference type="GO" id="GO:0051301">
    <property type="term" value="P:cell division"/>
    <property type="evidence" value="ECO:0007669"/>
    <property type="project" value="UniProtKB-KW"/>
</dbReference>
<dbReference type="GO" id="GO:1990758">
    <property type="term" value="P:mitotic sister chromatid biorientation"/>
    <property type="evidence" value="ECO:0000250"/>
    <property type="project" value="UniProtKB"/>
</dbReference>
<dbReference type="GO" id="GO:1990976">
    <property type="term" value="P:protein transport along microtubule to mitotic spindle pole body"/>
    <property type="evidence" value="ECO:0000250"/>
    <property type="project" value="UniProtKB"/>
</dbReference>
<dbReference type="InterPro" id="IPR013964">
    <property type="entry name" value="DASH_Ask1"/>
</dbReference>
<dbReference type="PANTHER" id="PTHR28200">
    <property type="entry name" value="DASH COMPLEX SUBUNIT ASK1"/>
    <property type="match status" value="1"/>
</dbReference>
<dbReference type="PANTHER" id="PTHR28200:SF1">
    <property type="entry name" value="DASH COMPLEX SUBUNIT ASK1"/>
    <property type="match status" value="1"/>
</dbReference>
<dbReference type="Pfam" id="PF08655">
    <property type="entry name" value="DASH_Ask1"/>
    <property type="match status" value="1"/>
</dbReference>
<name>ASK1_YEAS7</name>
<reference key="1">
    <citation type="journal article" date="2007" name="Proc. Natl. Acad. Sci. U.S.A.">
        <title>Genome sequencing and comparative analysis of Saccharomyces cerevisiae strain YJM789.</title>
        <authorList>
            <person name="Wei W."/>
            <person name="McCusker J.H."/>
            <person name="Hyman R.W."/>
            <person name="Jones T."/>
            <person name="Ning Y."/>
            <person name="Cao Z."/>
            <person name="Gu Z."/>
            <person name="Bruno D."/>
            <person name="Miranda M."/>
            <person name="Nguyen M."/>
            <person name="Wilhelmy J."/>
            <person name="Komp C."/>
            <person name="Tamse R."/>
            <person name="Wang X."/>
            <person name="Jia P."/>
            <person name="Luedi P."/>
            <person name="Oefner P.J."/>
            <person name="David L."/>
            <person name="Dietrich F.S."/>
            <person name="Li Y."/>
            <person name="Davis R.W."/>
            <person name="Steinmetz L.M."/>
        </authorList>
    </citation>
    <scope>NUCLEOTIDE SEQUENCE [LARGE SCALE GENOMIC DNA]</scope>
    <source>
        <strain>YJM789</strain>
    </source>
</reference>
<keyword id="KW-0131">Cell cycle</keyword>
<keyword id="KW-0132">Cell division</keyword>
<keyword id="KW-0137">Centromere</keyword>
<keyword id="KW-0158">Chromosome</keyword>
<keyword id="KW-0159">Chromosome partition</keyword>
<keyword id="KW-0963">Cytoplasm</keyword>
<keyword id="KW-0206">Cytoskeleton</keyword>
<keyword id="KW-0995">Kinetochore</keyword>
<keyword id="KW-0493">Microtubule</keyword>
<keyword id="KW-0498">Mitosis</keyword>
<keyword id="KW-0539">Nucleus</keyword>
<keyword id="KW-0597">Phosphoprotein</keyword>
<organism>
    <name type="scientific">Saccharomyces cerevisiae (strain YJM789)</name>
    <name type="common">Baker's yeast</name>
    <dbReference type="NCBI Taxonomy" id="307796"/>
    <lineage>
        <taxon>Eukaryota</taxon>
        <taxon>Fungi</taxon>
        <taxon>Dikarya</taxon>
        <taxon>Ascomycota</taxon>
        <taxon>Saccharomycotina</taxon>
        <taxon>Saccharomycetes</taxon>
        <taxon>Saccharomycetales</taxon>
        <taxon>Saccharomycetaceae</taxon>
        <taxon>Saccharomyces</taxon>
    </lineage>
</organism>